<organism>
    <name type="scientific">Xenopus laevis</name>
    <name type="common">African clawed frog</name>
    <dbReference type="NCBI Taxonomy" id="8355"/>
    <lineage>
        <taxon>Eukaryota</taxon>
        <taxon>Metazoa</taxon>
        <taxon>Chordata</taxon>
        <taxon>Craniata</taxon>
        <taxon>Vertebrata</taxon>
        <taxon>Euteleostomi</taxon>
        <taxon>Amphibia</taxon>
        <taxon>Batrachia</taxon>
        <taxon>Anura</taxon>
        <taxon>Pipoidea</taxon>
        <taxon>Pipidae</taxon>
        <taxon>Xenopodinae</taxon>
        <taxon>Xenopus</taxon>
        <taxon>Xenopus</taxon>
    </lineage>
</organism>
<evidence type="ECO:0000250" key="1"/>
<evidence type="ECO:0000305" key="2"/>
<name>ADPRM_XENLA</name>
<reference key="1">
    <citation type="submission" date="2003-08" db="EMBL/GenBank/DDBJ databases">
        <authorList>
            <consortium name="NIH - Xenopus Gene Collection (XGC) project"/>
        </authorList>
    </citation>
    <scope>NUCLEOTIDE SEQUENCE [LARGE SCALE MRNA]</scope>
    <source>
        <tissue>Ovary</tissue>
    </source>
</reference>
<accession>Q7T0Q0</accession>
<sequence length="356" mass="41167">MFNLCYKGQKLQRIVQSKRMEEPYFTFGIIADIQYADKDNRLNYLKTSMRYYRNSLTQLKVAIKEWATESIKPKFILQLGDIIDGVNTKDNSSTIALERVLEEMDKLPIQFHHVWGNHEFYNFSREYLNGSKLNSRARENRIDQQVGTSESGETNDESFYAYHFSPFPKFRFLLIDGYDLSPIGREKTSLKYDISFNLLKEKNPNEDLNSPTGLEEEQFVLFNGGISPSQLDWIQSILTSSDKKEEKVFVVSHLPVHPDAADTMCLIWNYPEVLSMLQSHPCVVGYLAGHNHEGRYCMDPSGIHHMTFSGVIETPPESQAFGTMYVYEDKMVLKGRGLVEDRTLHYRDPKNMQVGH</sequence>
<keyword id="KW-0378">Hydrolase</keyword>
<keyword id="KW-0479">Metal-binding</keyword>
<keyword id="KW-1185">Reference proteome</keyword>
<keyword id="KW-0862">Zinc</keyword>
<feature type="chain" id="PRO_0000286571" description="Manganese-dependent ADP-ribose/CDP-alcohol diphosphatase">
    <location>
        <begin position="1"/>
        <end position="356"/>
    </location>
</feature>
<feature type="binding site" evidence="1">
    <location>
        <position position="32"/>
    </location>
    <ligand>
        <name>Zn(2+)</name>
        <dbReference type="ChEBI" id="CHEBI:29105"/>
        <label>1</label>
    </ligand>
</feature>
<feature type="binding site" evidence="1">
    <location>
        <position position="34"/>
    </location>
    <ligand>
        <name>Zn(2+)</name>
        <dbReference type="ChEBI" id="CHEBI:29105"/>
        <label>1</label>
    </ligand>
</feature>
<feature type="binding site" evidence="1">
    <location>
        <position position="81"/>
    </location>
    <ligand>
        <name>Zn(2+)</name>
        <dbReference type="ChEBI" id="CHEBI:29105"/>
        <label>1</label>
    </ligand>
</feature>
<feature type="binding site" evidence="1">
    <location>
        <position position="81"/>
    </location>
    <ligand>
        <name>Zn(2+)</name>
        <dbReference type="ChEBI" id="CHEBI:29105"/>
        <label>2</label>
    </ligand>
</feature>
<feature type="binding site" evidence="1">
    <location>
        <position position="117"/>
    </location>
    <ligand>
        <name>Zn(2+)</name>
        <dbReference type="ChEBI" id="CHEBI:29105"/>
        <label>2</label>
    </ligand>
</feature>
<feature type="binding site" evidence="1">
    <location>
        <position position="253"/>
    </location>
    <ligand>
        <name>Zn(2+)</name>
        <dbReference type="ChEBI" id="CHEBI:29105"/>
        <label>2</label>
    </ligand>
</feature>
<feature type="binding site" evidence="1">
    <location>
        <position position="290"/>
    </location>
    <ligand>
        <name>Zn(2+)</name>
        <dbReference type="ChEBI" id="CHEBI:29105"/>
        <label>2</label>
    </ligand>
</feature>
<feature type="binding site" evidence="1">
    <location>
        <position position="292"/>
    </location>
    <ligand>
        <name>Zn(2+)</name>
        <dbReference type="ChEBI" id="CHEBI:29105"/>
        <label>1</label>
    </ligand>
</feature>
<protein>
    <recommendedName>
        <fullName>Manganese-dependent ADP-ribose/CDP-alcohol diphosphatase</fullName>
        <ecNumber>3.6.1.13</ecNumber>
        <ecNumber>3.6.1.16</ecNumber>
        <ecNumber>3.6.1.53</ecNumber>
    </recommendedName>
    <alternativeName>
        <fullName>ADPRibase-Mn</fullName>
    </alternativeName>
    <alternativeName>
        <fullName>CDP-choline phosphohydrolase</fullName>
    </alternativeName>
</protein>
<dbReference type="EC" id="3.6.1.13"/>
<dbReference type="EC" id="3.6.1.16"/>
<dbReference type="EC" id="3.6.1.53"/>
<dbReference type="EMBL" id="BC056093">
    <property type="protein sequence ID" value="AAH56093.1"/>
    <property type="molecule type" value="mRNA"/>
</dbReference>
<dbReference type="RefSeq" id="NP_001080428.1">
    <property type="nucleotide sequence ID" value="NM_001086959.1"/>
</dbReference>
<dbReference type="SMR" id="Q7T0Q0"/>
<dbReference type="DNASU" id="380120"/>
<dbReference type="GeneID" id="380120"/>
<dbReference type="KEGG" id="xla:380120"/>
<dbReference type="AGR" id="Xenbase:XB-GENE-5815863"/>
<dbReference type="CTD" id="380120"/>
<dbReference type="Xenbase" id="XB-GENE-5815863">
    <property type="gene designation" value="adprm.L"/>
</dbReference>
<dbReference type="OMA" id="GHNHAGN"/>
<dbReference type="OrthoDB" id="9675250at2759"/>
<dbReference type="Proteomes" id="UP000186698">
    <property type="component" value="Chromosome 9_10L"/>
</dbReference>
<dbReference type="Bgee" id="380120">
    <property type="expression patterns" value="Expressed in blastula and 19 other cell types or tissues"/>
</dbReference>
<dbReference type="GO" id="GO:0008663">
    <property type="term" value="F:2',3'-cyclic-nucleotide 2'-phosphodiesterase activity"/>
    <property type="evidence" value="ECO:0000318"/>
    <property type="project" value="GO_Central"/>
</dbReference>
<dbReference type="GO" id="GO:0047631">
    <property type="term" value="F:ADP-ribose diphosphatase activity"/>
    <property type="evidence" value="ECO:0000318"/>
    <property type="project" value="GO_Central"/>
</dbReference>
<dbReference type="GO" id="GO:0047734">
    <property type="term" value="F:CDP-glycerol diphosphatase activity"/>
    <property type="evidence" value="ECO:0000318"/>
    <property type="project" value="GO_Central"/>
</dbReference>
<dbReference type="GO" id="GO:0030145">
    <property type="term" value="F:manganese ion binding"/>
    <property type="evidence" value="ECO:0000318"/>
    <property type="project" value="GO_Central"/>
</dbReference>
<dbReference type="CDD" id="cd07396">
    <property type="entry name" value="MPP_Nbla03831"/>
    <property type="match status" value="1"/>
</dbReference>
<dbReference type="Gene3D" id="3.60.21.10">
    <property type="match status" value="1"/>
</dbReference>
<dbReference type="InterPro" id="IPR004843">
    <property type="entry name" value="Calcineurin-like_PHP_ApaH"/>
</dbReference>
<dbReference type="InterPro" id="IPR029052">
    <property type="entry name" value="Metallo-depent_PP-like"/>
</dbReference>
<dbReference type="InterPro" id="IPR041869">
    <property type="entry name" value="MPP_ADPRM"/>
</dbReference>
<dbReference type="PANTHER" id="PTHR16509">
    <property type="match status" value="1"/>
</dbReference>
<dbReference type="PANTHER" id="PTHR16509:SF9">
    <property type="entry name" value="MANGANESE-DEPENDENT ADP-RIBOSE_CDP-ALCOHOL DIPHOSPHATASE"/>
    <property type="match status" value="1"/>
</dbReference>
<dbReference type="Pfam" id="PF00149">
    <property type="entry name" value="Metallophos"/>
    <property type="match status" value="1"/>
</dbReference>
<dbReference type="SUPFAM" id="SSF56300">
    <property type="entry name" value="Metallo-dependent phosphatases"/>
    <property type="match status" value="1"/>
</dbReference>
<proteinExistence type="evidence at transcript level"/>
<comment type="function">
    <text evidence="1">Hydrolyzes ADP-ribose, IDP-ribose, CDP-glycerol, CDP-choline and CDP-ethanolamine, but not other non-reducing ADP-sugars or CDP-glucose.</text>
</comment>
<comment type="catalytic activity">
    <reaction>
        <text>CDP-choline + H2O = phosphocholine + CMP + 2 H(+)</text>
        <dbReference type="Rhea" id="RHEA:32487"/>
        <dbReference type="ChEBI" id="CHEBI:15377"/>
        <dbReference type="ChEBI" id="CHEBI:15378"/>
        <dbReference type="ChEBI" id="CHEBI:58779"/>
        <dbReference type="ChEBI" id="CHEBI:60377"/>
        <dbReference type="ChEBI" id="CHEBI:295975"/>
        <dbReference type="EC" id="3.6.1.53"/>
    </reaction>
</comment>
<comment type="catalytic activity">
    <reaction>
        <text>ADP-D-ribose + H2O = D-ribose 5-phosphate + AMP + 2 H(+)</text>
        <dbReference type="Rhea" id="RHEA:10412"/>
        <dbReference type="ChEBI" id="CHEBI:15377"/>
        <dbReference type="ChEBI" id="CHEBI:15378"/>
        <dbReference type="ChEBI" id="CHEBI:57967"/>
        <dbReference type="ChEBI" id="CHEBI:78346"/>
        <dbReference type="ChEBI" id="CHEBI:456215"/>
        <dbReference type="EC" id="3.6.1.13"/>
    </reaction>
</comment>
<comment type="catalytic activity">
    <reaction>
        <text>ADP-D-ribose + H2O = D-ribose 5-phosphate + AMP + 2 H(+)</text>
        <dbReference type="Rhea" id="RHEA:10412"/>
        <dbReference type="ChEBI" id="CHEBI:15377"/>
        <dbReference type="ChEBI" id="CHEBI:15378"/>
        <dbReference type="ChEBI" id="CHEBI:57967"/>
        <dbReference type="ChEBI" id="CHEBI:78346"/>
        <dbReference type="ChEBI" id="CHEBI:456215"/>
        <dbReference type="EC" id="3.6.1.53"/>
    </reaction>
</comment>
<comment type="catalytic activity">
    <reaction>
        <text>CDP-glycerol + H2O = sn-glycerol 3-phosphate + CMP + 2 H(+)</text>
        <dbReference type="Rhea" id="RHEA:21692"/>
        <dbReference type="ChEBI" id="CHEBI:15377"/>
        <dbReference type="ChEBI" id="CHEBI:15378"/>
        <dbReference type="ChEBI" id="CHEBI:57597"/>
        <dbReference type="ChEBI" id="CHEBI:58311"/>
        <dbReference type="ChEBI" id="CHEBI:60377"/>
        <dbReference type="EC" id="3.6.1.16"/>
    </reaction>
</comment>
<comment type="cofactor">
    <cofactor evidence="1">
        <name>Mg(2+)</name>
        <dbReference type="ChEBI" id="CHEBI:18420"/>
    </cofactor>
</comment>
<comment type="subunit">
    <text evidence="1">Monomer.</text>
</comment>
<comment type="similarity">
    <text evidence="2">Belongs to the ADPRibase-Mn family.</text>
</comment>
<gene>
    <name type="primary">adprm</name>
</gene>